<comment type="function">
    <text evidence="1">DNA-dependent RNA polymerase catalyzes the transcription of DNA into RNA using the four ribonucleoside triphosphates as substrates.</text>
</comment>
<comment type="catalytic activity">
    <reaction>
        <text>RNA(n) + a ribonucleoside 5'-triphosphate = RNA(n+1) + diphosphate</text>
        <dbReference type="Rhea" id="RHEA:21248"/>
        <dbReference type="Rhea" id="RHEA-COMP:14527"/>
        <dbReference type="Rhea" id="RHEA-COMP:17342"/>
        <dbReference type="ChEBI" id="CHEBI:33019"/>
        <dbReference type="ChEBI" id="CHEBI:61557"/>
        <dbReference type="ChEBI" id="CHEBI:140395"/>
        <dbReference type="EC" id="2.7.7.6"/>
    </reaction>
</comment>
<comment type="subunit">
    <text evidence="1">In plastids the minimal PEP RNA polymerase catalytic core is composed of four subunits: alpha, beta, beta', and beta''. When a (nuclear-encoded) sigma factor is associated with the core the holoenzyme is formed, which can initiate transcription (By similarity).</text>
</comment>
<comment type="subcellular location">
    <subcellularLocation>
        <location>Plastid</location>
        <location>Chloroplast</location>
    </subcellularLocation>
</comment>
<comment type="domain">
    <text evidence="1">The N-terminal domain is essential for RNAP assembly and basal transcription, whereas the C-terminal domain is involved in interaction with transcriptional regulators and with upstream promoter elements.</text>
</comment>
<comment type="similarity">
    <text evidence="2">Belongs to the RNA polymerase alpha chain family.</text>
</comment>
<comment type="caution">
    <text evidence="2">Could be the product of a pseudogene. There are 3 rpoA-like genes in this organism (found in the inverted repeat). None of them are convincing as rpoA, and it may be that the functional gene is in the nucleus.</text>
</comment>
<gene>
    <name type="primary">rpoAL2-A</name>
    <name type="synonym">ORF332</name>
</gene>
<gene>
    <name type="primary">rpoAL2-B</name>
    <name type="synonym">ORF332</name>
</gene>
<accession>Q06FN4</accession>
<feature type="chain" id="PRO_0000296902" description="Putative DNA-directed RNA polymerase subunit alpha-like 2">
    <location>
        <begin position="1"/>
        <end position="322"/>
    </location>
</feature>
<feature type="region of interest" description="Alpha N-terminal domain (alpha-NTD)" evidence="1">
    <location>
        <begin position="1"/>
        <end position="232"/>
    </location>
</feature>
<feature type="region of interest" description="Alpha C-terminal domain (alpha-CTD)" evidence="1">
    <location>
        <begin position="280"/>
        <end position="322"/>
    </location>
</feature>
<name>RPAL2_PELHO</name>
<dbReference type="EC" id="2.7.7.6"/>
<dbReference type="EMBL" id="DQ897681">
    <property type="protein sequence ID" value="ABI17301.1"/>
    <property type="molecule type" value="Genomic_DNA"/>
</dbReference>
<dbReference type="EMBL" id="DQ897681">
    <property type="protein sequence ID" value="ABI17339.1"/>
    <property type="molecule type" value="Genomic_DNA"/>
</dbReference>
<dbReference type="RefSeq" id="YP_784109.1">
    <property type="nucleotide sequence ID" value="NC_008454.1"/>
</dbReference>
<dbReference type="RefSeq" id="YP_784147.1">
    <property type="nucleotide sequence ID" value="NC_008454.1"/>
</dbReference>
<dbReference type="SMR" id="Q06FN4"/>
<dbReference type="GeneID" id="4362844"/>
<dbReference type="GeneID" id="4362953"/>
<dbReference type="GO" id="GO:0009507">
    <property type="term" value="C:chloroplast"/>
    <property type="evidence" value="ECO:0007669"/>
    <property type="project" value="UniProtKB-SubCell"/>
</dbReference>
<dbReference type="GO" id="GO:0000428">
    <property type="term" value="C:DNA-directed RNA polymerase complex"/>
    <property type="evidence" value="ECO:0007669"/>
    <property type="project" value="UniProtKB-KW"/>
</dbReference>
<dbReference type="GO" id="GO:0005739">
    <property type="term" value="C:mitochondrion"/>
    <property type="evidence" value="ECO:0007669"/>
    <property type="project" value="GOC"/>
</dbReference>
<dbReference type="GO" id="GO:0003899">
    <property type="term" value="F:DNA-directed RNA polymerase activity"/>
    <property type="evidence" value="ECO:0007669"/>
    <property type="project" value="UniProtKB-EC"/>
</dbReference>
<dbReference type="GO" id="GO:0046983">
    <property type="term" value="F:protein dimerization activity"/>
    <property type="evidence" value="ECO:0007669"/>
    <property type="project" value="InterPro"/>
</dbReference>
<dbReference type="GO" id="GO:0006351">
    <property type="term" value="P:DNA-templated transcription"/>
    <property type="evidence" value="ECO:0007669"/>
    <property type="project" value="InterPro"/>
</dbReference>
<dbReference type="Gene3D" id="2.170.120.12">
    <property type="entry name" value="DNA-directed RNA polymerase, insert domain"/>
    <property type="match status" value="1"/>
</dbReference>
<dbReference type="Gene3D" id="3.30.1360.10">
    <property type="entry name" value="RNA polymerase, RBP11-like subunit"/>
    <property type="match status" value="1"/>
</dbReference>
<dbReference type="InterPro" id="IPR036603">
    <property type="entry name" value="RBP11-like"/>
</dbReference>
<dbReference type="InterPro" id="IPR036643">
    <property type="entry name" value="RNApol_insert_sf"/>
</dbReference>
<dbReference type="SUPFAM" id="SSF56553">
    <property type="entry name" value="Insert subdomain of RNA polymerase alpha subunit"/>
    <property type="match status" value="1"/>
</dbReference>
<dbReference type="SUPFAM" id="SSF55257">
    <property type="entry name" value="RBP11-like subunits of RNA polymerase"/>
    <property type="match status" value="1"/>
</dbReference>
<organism>
    <name type="scientific">Pelargonium hortorum</name>
    <name type="common">Common geranium</name>
    <name type="synonym">Pelargonium inquinans x Pelargonium zonale</name>
    <dbReference type="NCBI Taxonomy" id="4031"/>
    <lineage>
        <taxon>Eukaryota</taxon>
        <taxon>Viridiplantae</taxon>
        <taxon>Streptophyta</taxon>
        <taxon>Embryophyta</taxon>
        <taxon>Tracheophyta</taxon>
        <taxon>Spermatophyta</taxon>
        <taxon>Magnoliopsida</taxon>
        <taxon>eudicotyledons</taxon>
        <taxon>Gunneridae</taxon>
        <taxon>Pentapetalae</taxon>
        <taxon>rosids</taxon>
        <taxon>malvids</taxon>
        <taxon>Geraniales</taxon>
        <taxon>Geraniaceae</taxon>
        <taxon>Pelargonium</taxon>
    </lineage>
</organism>
<evidence type="ECO:0000250" key="1"/>
<evidence type="ECO:0000305" key="2"/>
<protein>
    <recommendedName>
        <fullName>Putative DNA-directed RNA polymerase subunit alpha-like 2</fullName>
        <shortName>Putative PEP 2</shortName>
        <ecNumber>2.7.7.6</ecNumber>
    </recommendedName>
    <alternativeName>
        <fullName>Putative plastid-encoded RNA polymerase subunit alpha 2</fullName>
        <shortName>Putative RNA polymerase subunit alpha 2</shortName>
    </alternativeName>
</protein>
<geneLocation type="chloroplast"/>
<keyword id="KW-0150">Chloroplast</keyword>
<keyword id="KW-0240">DNA-directed RNA polymerase</keyword>
<keyword id="KW-0548">Nucleotidyltransferase</keyword>
<keyword id="KW-0934">Plastid</keyword>
<keyword id="KW-0804">Transcription</keyword>
<keyword id="KW-0808">Transferase</keyword>
<proteinExistence type="uncertain"/>
<sequence>MSNPNNGAEWQQVEADQLDSGLYYGRFALSPLTAKQASLLKKGLPEALLTEILCLRFTHAKIQNECVNLMNIVGIQESLDEILKNFGKIILTGKLEEFVGKGPFVAILDVRGPLNAMAVDIELPPGIKVEIETQHIATITEPIPFVVELKIELVSSTSKGETGITDEEGFSIDPNPPIQKVDTSIQCYDYQGEPFQTLFLDIWTDRTIHPHEALAQASRKIFGLLSLVFQAEYFQYNELENGLRYGKFCLYPMTKEQFQWIQTALNEALALDMSGESKHEGPVTDEEGDSIDPTFTPVQKWDITMNSYQYSGETFQGLLSRF</sequence>
<reference key="1">
    <citation type="journal article" date="2006" name="Mol. Biol. Evol.">
        <title>The complete chloroplast genome sequence of Pelargonium x hortorum: organization and evolution of the largest and most highly rearranged chloroplast genome of land plants.</title>
        <authorList>
            <person name="Chumley T.W."/>
            <person name="Palmer J.D."/>
            <person name="Mower J.P."/>
            <person name="Fourcade H.M."/>
            <person name="Calie P.J."/>
            <person name="Boore J.L."/>
            <person name="Jansen R.K."/>
        </authorList>
    </citation>
    <scope>NUCLEOTIDE SEQUENCE [LARGE SCALE GENOMIC DNA]</scope>
    <source>
        <strain>cv. Ringo White</strain>
    </source>
</reference>